<dbReference type="EC" id="6.3.2.4" evidence="2"/>
<dbReference type="EMBL" id="CP000411">
    <property type="protein sequence ID" value="ABJ56609.1"/>
    <property type="molecule type" value="Genomic_DNA"/>
</dbReference>
<dbReference type="RefSeq" id="WP_002820152.1">
    <property type="nucleotide sequence ID" value="NC_008528.1"/>
</dbReference>
<dbReference type="SMR" id="Q04G13"/>
<dbReference type="STRING" id="203123.OEOE_0672"/>
<dbReference type="KEGG" id="ooe:OEOE_0672"/>
<dbReference type="eggNOG" id="COG1181">
    <property type="taxonomic scope" value="Bacteria"/>
</dbReference>
<dbReference type="HOGENOM" id="CLU_039268_0_1_9"/>
<dbReference type="UniPathway" id="UPA00219"/>
<dbReference type="Proteomes" id="UP000000774">
    <property type="component" value="Chromosome"/>
</dbReference>
<dbReference type="GO" id="GO:0005829">
    <property type="term" value="C:cytosol"/>
    <property type="evidence" value="ECO:0007669"/>
    <property type="project" value="TreeGrafter"/>
</dbReference>
<dbReference type="GO" id="GO:0005524">
    <property type="term" value="F:ATP binding"/>
    <property type="evidence" value="ECO:0007669"/>
    <property type="project" value="UniProtKB-KW"/>
</dbReference>
<dbReference type="GO" id="GO:0008716">
    <property type="term" value="F:D-alanine-D-alanine ligase activity"/>
    <property type="evidence" value="ECO:0007669"/>
    <property type="project" value="UniProtKB-UniRule"/>
</dbReference>
<dbReference type="GO" id="GO:0046872">
    <property type="term" value="F:metal ion binding"/>
    <property type="evidence" value="ECO:0007669"/>
    <property type="project" value="UniProtKB-KW"/>
</dbReference>
<dbReference type="GO" id="GO:0071555">
    <property type="term" value="P:cell wall organization"/>
    <property type="evidence" value="ECO:0007669"/>
    <property type="project" value="UniProtKB-KW"/>
</dbReference>
<dbReference type="GO" id="GO:0009252">
    <property type="term" value="P:peptidoglycan biosynthetic process"/>
    <property type="evidence" value="ECO:0007669"/>
    <property type="project" value="UniProtKB-UniRule"/>
</dbReference>
<dbReference type="GO" id="GO:0008360">
    <property type="term" value="P:regulation of cell shape"/>
    <property type="evidence" value="ECO:0007669"/>
    <property type="project" value="UniProtKB-KW"/>
</dbReference>
<dbReference type="Gene3D" id="3.40.50.20">
    <property type="match status" value="1"/>
</dbReference>
<dbReference type="Gene3D" id="3.30.1490.20">
    <property type="entry name" value="ATP-grasp fold, A domain"/>
    <property type="match status" value="1"/>
</dbReference>
<dbReference type="Gene3D" id="3.30.470.20">
    <property type="entry name" value="ATP-grasp fold, B domain"/>
    <property type="match status" value="1"/>
</dbReference>
<dbReference type="HAMAP" id="MF_00047">
    <property type="entry name" value="Dala_Dala_lig"/>
    <property type="match status" value="1"/>
</dbReference>
<dbReference type="InterPro" id="IPR011761">
    <property type="entry name" value="ATP-grasp"/>
</dbReference>
<dbReference type="InterPro" id="IPR013815">
    <property type="entry name" value="ATP_grasp_subdomain_1"/>
</dbReference>
<dbReference type="InterPro" id="IPR000291">
    <property type="entry name" value="D-Ala_lig_Van_CS"/>
</dbReference>
<dbReference type="InterPro" id="IPR005905">
    <property type="entry name" value="D_ala_D_ala"/>
</dbReference>
<dbReference type="InterPro" id="IPR011095">
    <property type="entry name" value="Dala_Dala_lig_C"/>
</dbReference>
<dbReference type="InterPro" id="IPR011127">
    <property type="entry name" value="Dala_Dala_lig_N"/>
</dbReference>
<dbReference type="InterPro" id="IPR016185">
    <property type="entry name" value="PreATP-grasp_dom_sf"/>
</dbReference>
<dbReference type="NCBIfam" id="TIGR01205">
    <property type="entry name" value="D_ala_D_alaTIGR"/>
    <property type="match status" value="1"/>
</dbReference>
<dbReference type="NCBIfam" id="NF002528">
    <property type="entry name" value="PRK01966.1-4"/>
    <property type="match status" value="1"/>
</dbReference>
<dbReference type="PANTHER" id="PTHR23132">
    <property type="entry name" value="D-ALANINE--D-ALANINE LIGASE"/>
    <property type="match status" value="1"/>
</dbReference>
<dbReference type="PANTHER" id="PTHR23132:SF25">
    <property type="entry name" value="D-ALANINE--D-ALANINE LIGASE A"/>
    <property type="match status" value="1"/>
</dbReference>
<dbReference type="Pfam" id="PF07478">
    <property type="entry name" value="Dala_Dala_lig_C"/>
    <property type="match status" value="1"/>
</dbReference>
<dbReference type="Pfam" id="PF01820">
    <property type="entry name" value="Dala_Dala_lig_N"/>
    <property type="match status" value="1"/>
</dbReference>
<dbReference type="PIRSF" id="PIRSF039102">
    <property type="entry name" value="Ddl/VanB"/>
    <property type="match status" value="1"/>
</dbReference>
<dbReference type="SUPFAM" id="SSF56059">
    <property type="entry name" value="Glutathione synthetase ATP-binding domain-like"/>
    <property type="match status" value="1"/>
</dbReference>
<dbReference type="SUPFAM" id="SSF52440">
    <property type="entry name" value="PreATP-grasp domain"/>
    <property type="match status" value="1"/>
</dbReference>
<dbReference type="PROSITE" id="PS50975">
    <property type="entry name" value="ATP_GRASP"/>
    <property type="match status" value="1"/>
</dbReference>
<dbReference type="PROSITE" id="PS00843">
    <property type="entry name" value="DALA_DALA_LIGASE_1"/>
    <property type="match status" value="1"/>
</dbReference>
<dbReference type="PROSITE" id="PS00844">
    <property type="entry name" value="DALA_DALA_LIGASE_2"/>
    <property type="match status" value="1"/>
</dbReference>
<proteinExistence type="inferred from homology"/>
<sequence length="377" mass="42113">MAEKIRVGLFFGGNSSEHDVSKRSAKNYYDALDPEKYQIFPVLISKKGIMIDSETSKRVLFGEDEDELLAGLPNKNADIFGPIDSIRNLKLDVLFPSVHGNLGEDGTLAGLFRLMNIPYVGSGLRAHAISFDKVITKELMTVNGIRNTKYIVIFQNDKNKPDWDSVSKQLGEVVFVKAANQGSSVGVSRVTNAEEYENALRDSFQYDEKLLVEKAVESPTELEIGLLGNDRVITSPIGAHWAPGQDHGSGWFDYKNKFVDNSKMKYQIPAKISPAKSKELENMAVKAYKVLGIKGFARIDFLMSKDGEIFLSEPNTLPGNTNMSLFPILFEAAGMNRSQQAEKLIQLAFEEFKREQNISYSFKELGSEKLGQFDIKK</sequence>
<name>DDL_OENOB</name>
<feature type="chain" id="PRO_0000341142" description="D-alanine--D-alanine ligase">
    <location>
        <begin position="1"/>
        <end position="377"/>
    </location>
</feature>
<feature type="domain" description="ATP-grasp" evidence="2">
    <location>
        <begin position="137"/>
        <end position="346"/>
    </location>
</feature>
<feature type="binding site" evidence="2">
    <location>
        <begin position="167"/>
        <end position="222"/>
    </location>
    <ligand>
        <name>ATP</name>
        <dbReference type="ChEBI" id="CHEBI:30616"/>
    </ligand>
</feature>
<feature type="binding site" evidence="2">
    <location>
        <position position="300"/>
    </location>
    <ligand>
        <name>Mg(2+)</name>
        <dbReference type="ChEBI" id="CHEBI:18420"/>
        <label>1</label>
    </ligand>
</feature>
<feature type="binding site" evidence="2">
    <location>
        <position position="313"/>
    </location>
    <ligand>
        <name>Mg(2+)</name>
        <dbReference type="ChEBI" id="CHEBI:18420"/>
        <label>1</label>
    </ligand>
</feature>
<feature type="binding site" evidence="2">
    <location>
        <position position="313"/>
    </location>
    <ligand>
        <name>Mg(2+)</name>
        <dbReference type="ChEBI" id="CHEBI:18420"/>
        <label>2</label>
    </ligand>
</feature>
<feature type="binding site" evidence="2">
    <location>
        <position position="315"/>
    </location>
    <ligand>
        <name>Mg(2+)</name>
        <dbReference type="ChEBI" id="CHEBI:18420"/>
        <label>2</label>
    </ligand>
</feature>
<gene>
    <name evidence="2" type="primary">ddl</name>
    <name type="ordered locus">OEOE_0672</name>
</gene>
<keyword id="KW-0067">ATP-binding</keyword>
<keyword id="KW-0133">Cell shape</keyword>
<keyword id="KW-0961">Cell wall biogenesis/degradation</keyword>
<keyword id="KW-0963">Cytoplasm</keyword>
<keyword id="KW-0436">Ligase</keyword>
<keyword id="KW-0460">Magnesium</keyword>
<keyword id="KW-0464">Manganese</keyword>
<keyword id="KW-0479">Metal-binding</keyword>
<keyword id="KW-0547">Nucleotide-binding</keyword>
<keyword id="KW-0573">Peptidoglycan synthesis</keyword>
<keyword id="KW-1185">Reference proteome</keyword>
<accession>Q04G13</accession>
<comment type="function">
    <text evidence="2">Cell wall formation.</text>
</comment>
<comment type="catalytic activity">
    <reaction evidence="2">
        <text>2 D-alanine + ATP = D-alanyl-D-alanine + ADP + phosphate + H(+)</text>
        <dbReference type="Rhea" id="RHEA:11224"/>
        <dbReference type="ChEBI" id="CHEBI:15378"/>
        <dbReference type="ChEBI" id="CHEBI:30616"/>
        <dbReference type="ChEBI" id="CHEBI:43474"/>
        <dbReference type="ChEBI" id="CHEBI:57416"/>
        <dbReference type="ChEBI" id="CHEBI:57822"/>
        <dbReference type="ChEBI" id="CHEBI:456216"/>
        <dbReference type="EC" id="6.3.2.4"/>
    </reaction>
</comment>
<comment type="cofactor">
    <cofactor evidence="1">
        <name>Mg(2+)</name>
        <dbReference type="ChEBI" id="CHEBI:18420"/>
    </cofactor>
    <cofactor evidence="1">
        <name>Mn(2+)</name>
        <dbReference type="ChEBI" id="CHEBI:29035"/>
    </cofactor>
    <text evidence="1">Binds 2 magnesium or manganese ions per subunit.</text>
</comment>
<comment type="pathway">
    <text evidence="2">Cell wall biogenesis; peptidoglycan biosynthesis.</text>
</comment>
<comment type="subcellular location">
    <subcellularLocation>
        <location evidence="2">Cytoplasm</location>
    </subcellularLocation>
</comment>
<comment type="similarity">
    <text evidence="2">Belongs to the D-alanine--D-alanine ligase family.</text>
</comment>
<organism>
    <name type="scientific">Oenococcus oeni (strain ATCC BAA-331 / PSU-1)</name>
    <dbReference type="NCBI Taxonomy" id="203123"/>
    <lineage>
        <taxon>Bacteria</taxon>
        <taxon>Bacillati</taxon>
        <taxon>Bacillota</taxon>
        <taxon>Bacilli</taxon>
        <taxon>Lactobacillales</taxon>
        <taxon>Lactobacillaceae</taxon>
        <taxon>Oenococcus</taxon>
    </lineage>
</organism>
<evidence type="ECO:0000250" key="1"/>
<evidence type="ECO:0000255" key="2">
    <source>
        <dbReference type="HAMAP-Rule" id="MF_00047"/>
    </source>
</evidence>
<protein>
    <recommendedName>
        <fullName evidence="2">D-alanine--D-alanine ligase</fullName>
        <ecNumber evidence="2">6.3.2.4</ecNumber>
    </recommendedName>
    <alternativeName>
        <fullName evidence="2">D-Ala-D-Ala ligase</fullName>
    </alternativeName>
    <alternativeName>
        <fullName evidence="2">D-alanylalanine synthetase</fullName>
    </alternativeName>
</protein>
<reference key="1">
    <citation type="journal article" date="2006" name="Proc. Natl. Acad. Sci. U.S.A.">
        <title>Comparative genomics of the lactic acid bacteria.</title>
        <authorList>
            <person name="Makarova K.S."/>
            <person name="Slesarev A."/>
            <person name="Wolf Y.I."/>
            <person name="Sorokin A."/>
            <person name="Mirkin B."/>
            <person name="Koonin E.V."/>
            <person name="Pavlov A."/>
            <person name="Pavlova N."/>
            <person name="Karamychev V."/>
            <person name="Polouchine N."/>
            <person name="Shakhova V."/>
            <person name="Grigoriev I."/>
            <person name="Lou Y."/>
            <person name="Rohksar D."/>
            <person name="Lucas S."/>
            <person name="Huang K."/>
            <person name="Goodstein D.M."/>
            <person name="Hawkins T."/>
            <person name="Plengvidhya V."/>
            <person name="Welker D."/>
            <person name="Hughes J."/>
            <person name="Goh Y."/>
            <person name="Benson A."/>
            <person name="Baldwin K."/>
            <person name="Lee J.-H."/>
            <person name="Diaz-Muniz I."/>
            <person name="Dosti B."/>
            <person name="Smeianov V."/>
            <person name="Wechter W."/>
            <person name="Barabote R."/>
            <person name="Lorca G."/>
            <person name="Altermann E."/>
            <person name="Barrangou R."/>
            <person name="Ganesan B."/>
            <person name="Xie Y."/>
            <person name="Rawsthorne H."/>
            <person name="Tamir D."/>
            <person name="Parker C."/>
            <person name="Breidt F."/>
            <person name="Broadbent J.R."/>
            <person name="Hutkins R."/>
            <person name="O'Sullivan D."/>
            <person name="Steele J."/>
            <person name="Unlu G."/>
            <person name="Saier M.H. Jr."/>
            <person name="Klaenhammer T."/>
            <person name="Richardson P."/>
            <person name="Kozyavkin S."/>
            <person name="Weimer B.C."/>
            <person name="Mills D.A."/>
        </authorList>
    </citation>
    <scope>NUCLEOTIDE SEQUENCE [LARGE SCALE GENOMIC DNA]</scope>
    <source>
        <strain>ATCC BAA-331 / PSU-1</strain>
    </source>
</reference>